<name>COPZ_STAAW</name>
<reference key="1">
    <citation type="journal article" date="2002" name="Lancet">
        <title>Genome and virulence determinants of high virulence community-acquired MRSA.</title>
        <authorList>
            <person name="Baba T."/>
            <person name="Takeuchi F."/>
            <person name="Kuroda M."/>
            <person name="Yuzawa H."/>
            <person name="Aoki K."/>
            <person name="Oguchi A."/>
            <person name="Nagai Y."/>
            <person name="Iwama N."/>
            <person name="Asano K."/>
            <person name="Naimi T."/>
            <person name="Kuroda H."/>
            <person name="Cui L."/>
            <person name="Yamamoto K."/>
            <person name="Hiramatsu K."/>
        </authorList>
    </citation>
    <scope>NUCLEOTIDE SEQUENCE [LARGE SCALE GENOMIC DNA]</scope>
    <source>
        <strain>MW2</strain>
    </source>
</reference>
<protein>
    <recommendedName>
        <fullName>Copper chaperone CopZ</fullName>
    </recommendedName>
</protein>
<organism>
    <name type="scientific">Staphylococcus aureus (strain MW2)</name>
    <dbReference type="NCBI Taxonomy" id="196620"/>
    <lineage>
        <taxon>Bacteria</taxon>
        <taxon>Bacillati</taxon>
        <taxon>Bacillota</taxon>
        <taxon>Bacilli</taxon>
        <taxon>Bacillales</taxon>
        <taxon>Staphylococcaceae</taxon>
        <taxon>Staphylococcus</taxon>
    </lineage>
</organism>
<evidence type="ECO:0000250" key="1"/>
<evidence type="ECO:0000255" key="2">
    <source>
        <dbReference type="PROSITE-ProRule" id="PRU00280"/>
    </source>
</evidence>
<keyword id="KW-0143">Chaperone</keyword>
<keyword id="KW-0186">Copper</keyword>
<keyword id="KW-0963">Cytoplasm</keyword>
<keyword id="KW-0479">Metal-binding</keyword>
<gene>
    <name type="primary">copZ</name>
    <name type="ordered locus">MW2479</name>
</gene>
<comment type="function">
    <text evidence="1">Chaperone that serves for the intracellular sequestration and transport of Cu(+). Delivers Cu(+) to the copper-exporting P-type ATPase A (CopA) (By similarity).</text>
</comment>
<comment type="subcellular location">
    <subcellularLocation>
        <location evidence="1">Cytoplasm</location>
    </subcellularLocation>
</comment>
<feature type="chain" id="PRO_0000351278" description="Copper chaperone CopZ">
    <location>
        <begin position="1"/>
        <end position="68"/>
    </location>
</feature>
<feature type="domain" description="HMA" evidence="2">
    <location>
        <begin position="2"/>
        <end position="68"/>
    </location>
</feature>
<feature type="binding site" evidence="2">
    <location>
        <position position="13"/>
    </location>
    <ligand>
        <name>Cu cation</name>
        <dbReference type="ChEBI" id="CHEBI:23378"/>
    </ligand>
</feature>
<feature type="binding site" evidence="2">
    <location>
        <position position="16"/>
    </location>
    <ligand>
        <name>Cu cation</name>
        <dbReference type="ChEBI" id="CHEBI:23378"/>
    </ligand>
</feature>
<sequence length="68" mass="7237">MSQEILNVEGMSCGHCKSAVESALNNIDGVTSADVNLENGQVSVQYDDSKVAVSQMKDAIEDQGYDVV</sequence>
<accession>Q79ZY4</accession>
<proteinExistence type="inferred from homology"/>
<dbReference type="EMBL" id="BA000033">
    <property type="protein sequence ID" value="BAB96344.1"/>
    <property type="molecule type" value="Genomic_DNA"/>
</dbReference>
<dbReference type="RefSeq" id="WP_000076661.1">
    <property type="nucleotide sequence ID" value="NC_003923.1"/>
</dbReference>
<dbReference type="SMR" id="Q79ZY4"/>
<dbReference type="KEGG" id="sam:MW2479"/>
<dbReference type="HOGENOM" id="CLU_134973_10_4_9"/>
<dbReference type="GO" id="GO:0005737">
    <property type="term" value="C:cytoplasm"/>
    <property type="evidence" value="ECO:0007669"/>
    <property type="project" value="UniProtKB-SubCell"/>
</dbReference>
<dbReference type="GO" id="GO:0005507">
    <property type="term" value="F:copper ion binding"/>
    <property type="evidence" value="ECO:0007669"/>
    <property type="project" value="InterPro"/>
</dbReference>
<dbReference type="CDD" id="cd00371">
    <property type="entry name" value="HMA"/>
    <property type="match status" value="1"/>
</dbReference>
<dbReference type="FunFam" id="3.30.70.100:FF:000005">
    <property type="entry name" value="Copper-exporting P-type ATPase A"/>
    <property type="match status" value="1"/>
</dbReference>
<dbReference type="Gene3D" id="3.30.70.100">
    <property type="match status" value="1"/>
</dbReference>
<dbReference type="InterPro" id="IPR049740">
    <property type="entry name" value="CopZ"/>
</dbReference>
<dbReference type="InterPro" id="IPR017969">
    <property type="entry name" value="Heavy-metal-associated_CS"/>
</dbReference>
<dbReference type="InterPro" id="IPR006122">
    <property type="entry name" value="HMA_Cu_ion-bd"/>
</dbReference>
<dbReference type="InterPro" id="IPR006121">
    <property type="entry name" value="HMA_dom"/>
</dbReference>
<dbReference type="InterPro" id="IPR036163">
    <property type="entry name" value="HMA_dom_sf"/>
</dbReference>
<dbReference type="InterPro" id="IPR001802">
    <property type="entry name" value="MerP/CopZ"/>
</dbReference>
<dbReference type="NCBIfam" id="NF033795">
    <property type="entry name" value="chaper_CopZ_Bs"/>
    <property type="match status" value="1"/>
</dbReference>
<dbReference type="NCBIfam" id="TIGR00003">
    <property type="entry name" value="copper ion binding protein"/>
    <property type="match status" value="1"/>
</dbReference>
<dbReference type="PANTHER" id="PTHR46594">
    <property type="entry name" value="P-TYPE CATION-TRANSPORTING ATPASE"/>
    <property type="match status" value="1"/>
</dbReference>
<dbReference type="PANTHER" id="PTHR46594:SF4">
    <property type="entry name" value="P-TYPE CATION-TRANSPORTING ATPASE"/>
    <property type="match status" value="1"/>
</dbReference>
<dbReference type="Pfam" id="PF00403">
    <property type="entry name" value="HMA"/>
    <property type="match status" value="1"/>
</dbReference>
<dbReference type="PRINTS" id="PR00946">
    <property type="entry name" value="HGSCAVENGER"/>
</dbReference>
<dbReference type="SUPFAM" id="SSF55008">
    <property type="entry name" value="HMA, heavy metal-associated domain"/>
    <property type="match status" value="1"/>
</dbReference>
<dbReference type="PROSITE" id="PS01047">
    <property type="entry name" value="HMA_1"/>
    <property type="match status" value="1"/>
</dbReference>
<dbReference type="PROSITE" id="PS50846">
    <property type="entry name" value="HMA_2"/>
    <property type="match status" value="1"/>
</dbReference>